<feature type="chain" id="PRO_1000049338" description="Small ribosomal subunit protein bS16">
    <location>
        <begin position="1"/>
        <end position="95"/>
    </location>
</feature>
<evidence type="ECO:0000255" key="1">
    <source>
        <dbReference type="HAMAP-Rule" id="MF_00385"/>
    </source>
</evidence>
<evidence type="ECO:0000305" key="2"/>
<proteinExistence type="inferred from homology"/>
<reference key="1">
    <citation type="submission" date="2007-04" db="EMBL/GenBank/DDBJ databases">
        <title>Complete sequence of Roseiflexus sp. RS-1.</title>
        <authorList>
            <consortium name="US DOE Joint Genome Institute"/>
            <person name="Copeland A."/>
            <person name="Lucas S."/>
            <person name="Lapidus A."/>
            <person name="Barry K."/>
            <person name="Detter J.C."/>
            <person name="Glavina del Rio T."/>
            <person name="Hammon N."/>
            <person name="Israni S."/>
            <person name="Dalin E."/>
            <person name="Tice H."/>
            <person name="Pitluck S."/>
            <person name="Chertkov O."/>
            <person name="Brettin T."/>
            <person name="Bruce D."/>
            <person name="Han C."/>
            <person name="Schmutz J."/>
            <person name="Larimer F."/>
            <person name="Land M."/>
            <person name="Hauser L."/>
            <person name="Kyrpides N."/>
            <person name="Mikhailova N."/>
            <person name="Bryant D.A."/>
            <person name="Richardson P."/>
        </authorList>
    </citation>
    <scope>NUCLEOTIDE SEQUENCE [LARGE SCALE GENOMIC DNA]</scope>
    <source>
        <strain>RS-1</strain>
    </source>
</reference>
<comment type="similarity">
    <text evidence="1">Belongs to the bacterial ribosomal protein bS16 family.</text>
</comment>
<name>RS16_ROSS1</name>
<organism>
    <name type="scientific">Roseiflexus sp. (strain RS-1)</name>
    <dbReference type="NCBI Taxonomy" id="357808"/>
    <lineage>
        <taxon>Bacteria</taxon>
        <taxon>Bacillati</taxon>
        <taxon>Chloroflexota</taxon>
        <taxon>Chloroflexia</taxon>
        <taxon>Chloroflexales</taxon>
        <taxon>Roseiflexineae</taxon>
        <taxon>Roseiflexaceae</taxon>
        <taxon>Roseiflexus</taxon>
    </lineage>
</organism>
<gene>
    <name evidence="1" type="primary">rpsP</name>
    <name type="ordered locus">RoseRS_1287</name>
</gene>
<sequence>MVTIRLRRMGKTKQPSYRLVVADSRAPRDGKFIEIVGHYNPVRQPKELHVKADRVRYWLSVGAQPSETVVRLLKQVGVLDADGKPTPTATTPVEG</sequence>
<accession>A5UST8</accession>
<protein>
    <recommendedName>
        <fullName evidence="1">Small ribosomal subunit protein bS16</fullName>
    </recommendedName>
    <alternativeName>
        <fullName evidence="2">30S ribosomal protein S16</fullName>
    </alternativeName>
</protein>
<keyword id="KW-0687">Ribonucleoprotein</keyword>
<keyword id="KW-0689">Ribosomal protein</keyword>
<dbReference type="EMBL" id="CP000686">
    <property type="protein sequence ID" value="ABQ89691.1"/>
    <property type="molecule type" value="Genomic_DNA"/>
</dbReference>
<dbReference type="RefSeq" id="WP_011956043.1">
    <property type="nucleotide sequence ID" value="NC_009523.1"/>
</dbReference>
<dbReference type="SMR" id="A5UST8"/>
<dbReference type="STRING" id="357808.RoseRS_1287"/>
<dbReference type="KEGG" id="rrs:RoseRS_1287"/>
<dbReference type="eggNOG" id="COG0228">
    <property type="taxonomic scope" value="Bacteria"/>
</dbReference>
<dbReference type="HOGENOM" id="CLU_100590_5_0_0"/>
<dbReference type="OrthoDB" id="9807878at2"/>
<dbReference type="Proteomes" id="UP000006554">
    <property type="component" value="Chromosome"/>
</dbReference>
<dbReference type="GO" id="GO:0005737">
    <property type="term" value="C:cytoplasm"/>
    <property type="evidence" value="ECO:0007669"/>
    <property type="project" value="UniProtKB-ARBA"/>
</dbReference>
<dbReference type="GO" id="GO:0015935">
    <property type="term" value="C:small ribosomal subunit"/>
    <property type="evidence" value="ECO:0007669"/>
    <property type="project" value="TreeGrafter"/>
</dbReference>
<dbReference type="GO" id="GO:0003735">
    <property type="term" value="F:structural constituent of ribosome"/>
    <property type="evidence" value="ECO:0007669"/>
    <property type="project" value="InterPro"/>
</dbReference>
<dbReference type="GO" id="GO:0006412">
    <property type="term" value="P:translation"/>
    <property type="evidence" value="ECO:0007669"/>
    <property type="project" value="UniProtKB-UniRule"/>
</dbReference>
<dbReference type="Gene3D" id="3.30.1320.10">
    <property type="match status" value="1"/>
</dbReference>
<dbReference type="HAMAP" id="MF_00385">
    <property type="entry name" value="Ribosomal_bS16"/>
    <property type="match status" value="1"/>
</dbReference>
<dbReference type="InterPro" id="IPR000307">
    <property type="entry name" value="Ribosomal_bS16"/>
</dbReference>
<dbReference type="InterPro" id="IPR023803">
    <property type="entry name" value="Ribosomal_bS16_dom_sf"/>
</dbReference>
<dbReference type="NCBIfam" id="TIGR00002">
    <property type="entry name" value="S16"/>
    <property type="match status" value="1"/>
</dbReference>
<dbReference type="PANTHER" id="PTHR12919">
    <property type="entry name" value="30S RIBOSOMAL PROTEIN S16"/>
    <property type="match status" value="1"/>
</dbReference>
<dbReference type="PANTHER" id="PTHR12919:SF20">
    <property type="entry name" value="SMALL RIBOSOMAL SUBUNIT PROTEIN BS16M"/>
    <property type="match status" value="1"/>
</dbReference>
<dbReference type="Pfam" id="PF00886">
    <property type="entry name" value="Ribosomal_S16"/>
    <property type="match status" value="1"/>
</dbReference>
<dbReference type="SUPFAM" id="SSF54565">
    <property type="entry name" value="Ribosomal protein S16"/>
    <property type="match status" value="1"/>
</dbReference>